<feature type="chain" id="PRO_0000303504" description="tRNA N6-adenosine threonylcarbamoyltransferase">
    <location>
        <begin position="1"/>
        <end position="344"/>
    </location>
</feature>
<feature type="binding site" evidence="1">
    <location>
        <position position="111"/>
    </location>
    <ligand>
        <name>Fe cation</name>
        <dbReference type="ChEBI" id="CHEBI:24875"/>
    </ligand>
</feature>
<feature type="binding site" evidence="1">
    <location>
        <position position="115"/>
    </location>
    <ligand>
        <name>Fe cation</name>
        <dbReference type="ChEBI" id="CHEBI:24875"/>
    </ligand>
</feature>
<feature type="binding site" evidence="1">
    <location>
        <begin position="134"/>
        <end position="138"/>
    </location>
    <ligand>
        <name>substrate</name>
    </ligand>
</feature>
<feature type="binding site" evidence="1">
    <location>
        <position position="167"/>
    </location>
    <ligand>
        <name>substrate</name>
    </ligand>
</feature>
<feature type="binding site" evidence="1">
    <location>
        <position position="180"/>
    </location>
    <ligand>
        <name>substrate</name>
    </ligand>
</feature>
<feature type="binding site" evidence="1">
    <location>
        <position position="273"/>
    </location>
    <ligand>
        <name>substrate</name>
    </ligand>
</feature>
<feature type="binding site" evidence="1">
    <location>
        <position position="301"/>
    </location>
    <ligand>
        <name>Fe cation</name>
        <dbReference type="ChEBI" id="CHEBI:24875"/>
    </ligand>
</feature>
<reference key="1">
    <citation type="journal article" date="2010" name="PLoS ONE">
        <title>The complete multipartite genome sequence of Cupriavidus necator JMP134, a versatile pollutant degrader.</title>
        <authorList>
            <person name="Lykidis A."/>
            <person name="Perez-Pantoja D."/>
            <person name="Ledger T."/>
            <person name="Mavromatis K."/>
            <person name="Anderson I.J."/>
            <person name="Ivanova N.N."/>
            <person name="Hooper S.D."/>
            <person name="Lapidus A."/>
            <person name="Lucas S."/>
            <person name="Gonzalez B."/>
            <person name="Kyrpides N.C."/>
        </authorList>
    </citation>
    <scope>NUCLEOTIDE SEQUENCE [LARGE SCALE GENOMIC DNA]</scope>
    <source>
        <strain>JMP134 / LMG 1197</strain>
    </source>
</reference>
<dbReference type="EC" id="2.3.1.234" evidence="1"/>
<dbReference type="EMBL" id="CP000090">
    <property type="protein sequence ID" value="AAZ60263.1"/>
    <property type="molecule type" value="Genomic_DNA"/>
</dbReference>
<dbReference type="SMR" id="Q474C0"/>
<dbReference type="STRING" id="264198.Reut_A0884"/>
<dbReference type="KEGG" id="reu:Reut_A0884"/>
<dbReference type="eggNOG" id="COG0533">
    <property type="taxonomic scope" value="Bacteria"/>
</dbReference>
<dbReference type="HOGENOM" id="CLU_023208_0_2_4"/>
<dbReference type="OrthoDB" id="9806197at2"/>
<dbReference type="GO" id="GO:0005737">
    <property type="term" value="C:cytoplasm"/>
    <property type="evidence" value="ECO:0007669"/>
    <property type="project" value="UniProtKB-SubCell"/>
</dbReference>
<dbReference type="GO" id="GO:0005506">
    <property type="term" value="F:iron ion binding"/>
    <property type="evidence" value="ECO:0007669"/>
    <property type="project" value="UniProtKB-UniRule"/>
</dbReference>
<dbReference type="GO" id="GO:0061711">
    <property type="term" value="F:N(6)-L-threonylcarbamoyladenine synthase activity"/>
    <property type="evidence" value="ECO:0007669"/>
    <property type="project" value="UniProtKB-EC"/>
</dbReference>
<dbReference type="GO" id="GO:0002949">
    <property type="term" value="P:tRNA threonylcarbamoyladenosine modification"/>
    <property type="evidence" value="ECO:0007669"/>
    <property type="project" value="UniProtKB-UniRule"/>
</dbReference>
<dbReference type="CDD" id="cd24133">
    <property type="entry name" value="ASKHA_NBD_TsaD_bac"/>
    <property type="match status" value="1"/>
</dbReference>
<dbReference type="FunFam" id="3.30.420.40:FF:000012">
    <property type="entry name" value="tRNA N6-adenosine threonylcarbamoyltransferase"/>
    <property type="match status" value="1"/>
</dbReference>
<dbReference type="FunFam" id="3.30.420.40:FF:000040">
    <property type="entry name" value="tRNA N6-adenosine threonylcarbamoyltransferase"/>
    <property type="match status" value="1"/>
</dbReference>
<dbReference type="Gene3D" id="3.30.420.40">
    <property type="match status" value="2"/>
</dbReference>
<dbReference type="HAMAP" id="MF_01445">
    <property type="entry name" value="TsaD"/>
    <property type="match status" value="1"/>
</dbReference>
<dbReference type="InterPro" id="IPR043129">
    <property type="entry name" value="ATPase_NBD"/>
</dbReference>
<dbReference type="InterPro" id="IPR000905">
    <property type="entry name" value="Gcp-like_dom"/>
</dbReference>
<dbReference type="InterPro" id="IPR017861">
    <property type="entry name" value="KAE1/TsaD"/>
</dbReference>
<dbReference type="InterPro" id="IPR022450">
    <property type="entry name" value="TsaD"/>
</dbReference>
<dbReference type="NCBIfam" id="TIGR00329">
    <property type="entry name" value="gcp_kae1"/>
    <property type="match status" value="1"/>
</dbReference>
<dbReference type="NCBIfam" id="TIGR03723">
    <property type="entry name" value="T6A_TsaD_YgjD"/>
    <property type="match status" value="1"/>
</dbReference>
<dbReference type="PANTHER" id="PTHR11735">
    <property type="entry name" value="TRNA N6-ADENOSINE THREONYLCARBAMOYLTRANSFERASE"/>
    <property type="match status" value="1"/>
</dbReference>
<dbReference type="PANTHER" id="PTHR11735:SF6">
    <property type="entry name" value="TRNA N6-ADENOSINE THREONYLCARBAMOYLTRANSFERASE, MITOCHONDRIAL"/>
    <property type="match status" value="1"/>
</dbReference>
<dbReference type="Pfam" id="PF00814">
    <property type="entry name" value="TsaD"/>
    <property type="match status" value="1"/>
</dbReference>
<dbReference type="PRINTS" id="PR00789">
    <property type="entry name" value="OSIALOPTASE"/>
</dbReference>
<dbReference type="SUPFAM" id="SSF53067">
    <property type="entry name" value="Actin-like ATPase domain"/>
    <property type="match status" value="2"/>
</dbReference>
<protein>
    <recommendedName>
        <fullName evidence="1">tRNA N6-adenosine threonylcarbamoyltransferase</fullName>
        <ecNumber evidence="1">2.3.1.234</ecNumber>
    </recommendedName>
    <alternativeName>
        <fullName evidence="1">N6-L-threonylcarbamoyladenine synthase</fullName>
        <shortName evidence="1">t(6)A synthase</shortName>
    </alternativeName>
    <alternativeName>
        <fullName evidence="1">t(6)A37 threonylcarbamoyladenosine biosynthesis protein TsaD</fullName>
    </alternativeName>
    <alternativeName>
        <fullName evidence="1">tRNA threonylcarbamoyladenosine biosynthesis protein TsaD</fullName>
    </alternativeName>
</protein>
<keyword id="KW-0012">Acyltransferase</keyword>
<keyword id="KW-0963">Cytoplasm</keyword>
<keyword id="KW-0408">Iron</keyword>
<keyword id="KW-0479">Metal-binding</keyword>
<keyword id="KW-0808">Transferase</keyword>
<keyword id="KW-0819">tRNA processing</keyword>
<organism>
    <name type="scientific">Cupriavidus pinatubonensis (strain JMP 134 / LMG 1197)</name>
    <name type="common">Cupriavidus necator (strain JMP 134)</name>
    <dbReference type="NCBI Taxonomy" id="264198"/>
    <lineage>
        <taxon>Bacteria</taxon>
        <taxon>Pseudomonadati</taxon>
        <taxon>Pseudomonadota</taxon>
        <taxon>Betaproteobacteria</taxon>
        <taxon>Burkholderiales</taxon>
        <taxon>Burkholderiaceae</taxon>
        <taxon>Cupriavidus</taxon>
    </lineage>
</organism>
<accession>Q474C0</accession>
<name>TSAD_CUPPJ</name>
<evidence type="ECO:0000255" key="1">
    <source>
        <dbReference type="HAMAP-Rule" id="MF_01445"/>
    </source>
</evidence>
<gene>
    <name evidence="1" type="primary">tsaD</name>
    <name type="synonym">gcp</name>
    <name type="ordered locus">Reut_A0884</name>
</gene>
<proteinExistence type="inferred from homology"/>
<comment type="function">
    <text evidence="1">Required for the formation of a threonylcarbamoyl group on adenosine at position 37 (t(6)A37) in tRNAs that read codons beginning with adenine. Is involved in the transfer of the threonylcarbamoyl moiety of threonylcarbamoyl-AMP (TC-AMP) to the N6 group of A37, together with TsaE and TsaB. TsaD likely plays a direct catalytic role in this reaction.</text>
</comment>
<comment type="catalytic activity">
    <reaction evidence="1">
        <text>L-threonylcarbamoyladenylate + adenosine(37) in tRNA = N(6)-L-threonylcarbamoyladenosine(37) in tRNA + AMP + H(+)</text>
        <dbReference type="Rhea" id="RHEA:37059"/>
        <dbReference type="Rhea" id="RHEA-COMP:10162"/>
        <dbReference type="Rhea" id="RHEA-COMP:10163"/>
        <dbReference type="ChEBI" id="CHEBI:15378"/>
        <dbReference type="ChEBI" id="CHEBI:73682"/>
        <dbReference type="ChEBI" id="CHEBI:74411"/>
        <dbReference type="ChEBI" id="CHEBI:74418"/>
        <dbReference type="ChEBI" id="CHEBI:456215"/>
        <dbReference type="EC" id="2.3.1.234"/>
    </reaction>
</comment>
<comment type="cofactor">
    <cofactor evidence="1">
        <name>Fe(2+)</name>
        <dbReference type="ChEBI" id="CHEBI:29033"/>
    </cofactor>
    <text evidence="1">Binds 1 Fe(2+) ion per subunit.</text>
</comment>
<comment type="subcellular location">
    <subcellularLocation>
        <location evidence="1">Cytoplasm</location>
    </subcellularLocation>
</comment>
<comment type="similarity">
    <text evidence="1">Belongs to the KAE1 / TsaD family.</text>
</comment>
<sequence>MLVLGIESSCDETGLALYDTEAGLLSHALHSQIAMHRDYGGVVPELASRDHIRRVLPLLQQVLDEAGRSRADIDAIAFTQGPGLAGALLVGASVANALGFALNVPMVGVHHLEGHLLSPLLTREPPPFPFIALLVSGGHTQLMEVKGIGDYTLLGETLDDAAGEAFDKTAKLLGLGYPGGPEVSRLAEFGTPGAFDLPRPMLHSGNLDFSFAGLKTAVLTQTRKLANTCEQDRANLARAFVDAIVDVLAAKSFAALKQTGHKRLVVAGGVGANRQLRERLNQLGKQRKIDVYYPDLAFCTDNGAMIALAGAMRLQAAPDLAQHSYGYGVTPRWDLADIRLPSAA</sequence>